<dbReference type="EMBL" id="CP000058">
    <property type="protein sequence ID" value="AAZ34034.1"/>
    <property type="molecule type" value="Genomic_DNA"/>
</dbReference>
<dbReference type="RefSeq" id="WP_002555981.1">
    <property type="nucleotide sequence ID" value="NC_005773.3"/>
</dbReference>
<dbReference type="SMR" id="Q48BG6"/>
<dbReference type="KEGG" id="psp:PSPPH_5206"/>
<dbReference type="eggNOG" id="COG0355">
    <property type="taxonomic scope" value="Bacteria"/>
</dbReference>
<dbReference type="HOGENOM" id="CLU_084338_2_0_6"/>
<dbReference type="Proteomes" id="UP000000551">
    <property type="component" value="Chromosome"/>
</dbReference>
<dbReference type="GO" id="GO:0005886">
    <property type="term" value="C:plasma membrane"/>
    <property type="evidence" value="ECO:0007669"/>
    <property type="project" value="UniProtKB-SubCell"/>
</dbReference>
<dbReference type="GO" id="GO:0045259">
    <property type="term" value="C:proton-transporting ATP synthase complex"/>
    <property type="evidence" value="ECO:0007669"/>
    <property type="project" value="UniProtKB-KW"/>
</dbReference>
<dbReference type="GO" id="GO:0005524">
    <property type="term" value="F:ATP binding"/>
    <property type="evidence" value="ECO:0007669"/>
    <property type="project" value="UniProtKB-UniRule"/>
</dbReference>
<dbReference type="GO" id="GO:0046933">
    <property type="term" value="F:proton-transporting ATP synthase activity, rotational mechanism"/>
    <property type="evidence" value="ECO:0007669"/>
    <property type="project" value="UniProtKB-UniRule"/>
</dbReference>
<dbReference type="CDD" id="cd12152">
    <property type="entry name" value="F1-ATPase_delta"/>
    <property type="match status" value="1"/>
</dbReference>
<dbReference type="FunFam" id="2.60.15.10:FF:000001">
    <property type="entry name" value="ATP synthase epsilon chain"/>
    <property type="match status" value="1"/>
</dbReference>
<dbReference type="Gene3D" id="1.20.5.440">
    <property type="entry name" value="ATP synthase delta/epsilon subunit, C-terminal domain"/>
    <property type="match status" value="1"/>
</dbReference>
<dbReference type="Gene3D" id="2.60.15.10">
    <property type="entry name" value="F0F1 ATP synthase delta/epsilon subunit, N-terminal"/>
    <property type="match status" value="1"/>
</dbReference>
<dbReference type="HAMAP" id="MF_00530">
    <property type="entry name" value="ATP_synth_epsil_bac"/>
    <property type="match status" value="1"/>
</dbReference>
<dbReference type="InterPro" id="IPR036794">
    <property type="entry name" value="ATP_F1_dsu/esu_C_sf"/>
</dbReference>
<dbReference type="InterPro" id="IPR001469">
    <property type="entry name" value="ATP_synth_F1_dsu/esu"/>
</dbReference>
<dbReference type="InterPro" id="IPR020546">
    <property type="entry name" value="ATP_synth_F1_dsu/esu_N"/>
</dbReference>
<dbReference type="InterPro" id="IPR020547">
    <property type="entry name" value="ATP_synth_F1_esu_C"/>
</dbReference>
<dbReference type="InterPro" id="IPR036771">
    <property type="entry name" value="ATPsynth_dsu/esu_N"/>
</dbReference>
<dbReference type="NCBIfam" id="TIGR01216">
    <property type="entry name" value="ATP_synt_epsi"/>
    <property type="match status" value="1"/>
</dbReference>
<dbReference type="NCBIfam" id="NF001847">
    <property type="entry name" value="PRK00571.1-4"/>
    <property type="match status" value="1"/>
</dbReference>
<dbReference type="PANTHER" id="PTHR13822">
    <property type="entry name" value="ATP SYNTHASE DELTA/EPSILON CHAIN"/>
    <property type="match status" value="1"/>
</dbReference>
<dbReference type="PANTHER" id="PTHR13822:SF10">
    <property type="entry name" value="ATP SYNTHASE EPSILON CHAIN, CHLOROPLASTIC"/>
    <property type="match status" value="1"/>
</dbReference>
<dbReference type="Pfam" id="PF00401">
    <property type="entry name" value="ATP-synt_DE"/>
    <property type="match status" value="1"/>
</dbReference>
<dbReference type="Pfam" id="PF02823">
    <property type="entry name" value="ATP-synt_DE_N"/>
    <property type="match status" value="1"/>
</dbReference>
<dbReference type="SUPFAM" id="SSF46604">
    <property type="entry name" value="Epsilon subunit of F1F0-ATP synthase C-terminal domain"/>
    <property type="match status" value="1"/>
</dbReference>
<dbReference type="SUPFAM" id="SSF51344">
    <property type="entry name" value="Epsilon subunit of F1F0-ATP synthase N-terminal domain"/>
    <property type="match status" value="1"/>
</dbReference>
<accession>Q48BG6</accession>
<gene>
    <name evidence="1" type="primary">atpC</name>
    <name type="ordered locus">PSPPH_5206</name>
</gene>
<sequence>MAMTVHCDIVSAEGEIFSGLVEMVIAHGNLGDLGIAPGHAPLITDLKPGPIRLIKQGGEAEVFYISGGFLEVQPNMVKVLADTVQRAADLDEASAQAAVLAAEKALNEKGADFDYGSATARLAEAAAQLRTVQQIRKKFGG</sequence>
<name>ATPE_PSE14</name>
<proteinExistence type="inferred from homology"/>
<reference key="1">
    <citation type="journal article" date="2005" name="J. Bacteriol.">
        <title>Whole-genome sequence analysis of Pseudomonas syringae pv. phaseolicola 1448A reveals divergence among pathovars in genes involved in virulence and transposition.</title>
        <authorList>
            <person name="Joardar V."/>
            <person name="Lindeberg M."/>
            <person name="Jackson R.W."/>
            <person name="Selengut J."/>
            <person name="Dodson R."/>
            <person name="Brinkac L.M."/>
            <person name="Daugherty S.C."/>
            <person name="DeBoy R.T."/>
            <person name="Durkin A.S."/>
            <person name="Gwinn Giglio M."/>
            <person name="Madupu R."/>
            <person name="Nelson W.C."/>
            <person name="Rosovitz M.J."/>
            <person name="Sullivan S.A."/>
            <person name="Crabtree J."/>
            <person name="Creasy T."/>
            <person name="Davidsen T.M."/>
            <person name="Haft D.H."/>
            <person name="Zafar N."/>
            <person name="Zhou L."/>
            <person name="Halpin R."/>
            <person name="Holley T."/>
            <person name="Khouri H.M."/>
            <person name="Feldblyum T.V."/>
            <person name="White O."/>
            <person name="Fraser C.M."/>
            <person name="Chatterjee A.K."/>
            <person name="Cartinhour S."/>
            <person name="Schneider D."/>
            <person name="Mansfield J.W."/>
            <person name="Collmer A."/>
            <person name="Buell R."/>
        </authorList>
    </citation>
    <scope>NUCLEOTIDE SEQUENCE [LARGE SCALE GENOMIC DNA]</scope>
    <source>
        <strain>1448A / Race 6</strain>
    </source>
</reference>
<protein>
    <recommendedName>
        <fullName evidence="1">ATP synthase epsilon chain</fullName>
    </recommendedName>
    <alternativeName>
        <fullName evidence="1">ATP synthase F1 sector epsilon subunit</fullName>
    </alternativeName>
    <alternativeName>
        <fullName evidence="1">F-ATPase epsilon subunit</fullName>
    </alternativeName>
</protein>
<keyword id="KW-0066">ATP synthesis</keyword>
<keyword id="KW-0997">Cell inner membrane</keyword>
<keyword id="KW-1003">Cell membrane</keyword>
<keyword id="KW-0139">CF(1)</keyword>
<keyword id="KW-0375">Hydrogen ion transport</keyword>
<keyword id="KW-0406">Ion transport</keyword>
<keyword id="KW-0472">Membrane</keyword>
<keyword id="KW-0813">Transport</keyword>
<evidence type="ECO:0000255" key="1">
    <source>
        <dbReference type="HAMAP-Rule" id="MF_00530"/>
    </source>
</evidence>
<comment type="function">
    <text evidence="1">Produces ATP from ADP in the presence of a proton gradient across the membrane.</text>
</comment>
<comment type="subunit">
    <text>F-type ATPases have 2 components, CF(1) - the catalytic core - and CF(0) - the membrane proton channel. CF(1) has five subunits: alpha(3), beta(3), gamma(1), delta(1), epsilon(1). CF(0) has three main subunits: a, b and c.</text>
</comment>
<comment type="subcellular location">
    <subcellularLocation>
        <location evidence="1">Cell inner membrane</location>
        <topology evidence="1">Peripheral membrane protein</topology>
    </subcellularLocation>
</comment>
<comment type="similarity">
    <text evidence="1">Belongs to the ATPase epsilon chain family.</text>
</comment>
<feature type="chain" id="PRO_0000265864" description="ATP synthase epsilon chain">
    <location>
        <begin position="1"/>
        <end position="141"/>
    </location>
</feature>
<organism>
    <name type="scientific">Pseudomonas savastanoi pv. phaseolicola (strain 1448A / Race 6)</name>
    <name type="common">Pseudomonas syringae pv. phaseolicola (strain 1448A / Race 6)</name>
    <dbReference type="NCBI Taxonomy" id="264730"/>
    <lineage>
        <taxon>Bacteria</taxon>
        <taxon>Pseudomonadati</taxon>
        <taxon>Pseudomonadota</taxon>
        <taxon>Gammaproteobacteria</taxon>
        <taxon>Pseudomonadales</taxon>
        <taxon>Pseudomonadaceae</taxon>
        <taxon>Pseudomonas</taxon>
    </lineage>
</organism>